<comment type="function">
    <text evidence="1">Plays a central role in chromosome condensation, segregation and cell cycle progression. Functions as a homodimer, which is essential for chromosome partition. Involved in negative DNA supercoiling in vivo, and by this means organize and compact chromosomes. May achieve or facilitate chromosome segregation by condensation DNA from both sides of a centrally located replisome during cell division.</text>
</comment>
<comment type="subunit">
    <text evidence="1">Homodimerization via its hinge domain. Binds to DNA via its C-terminal region. Interacts, and probably forms a ternary complex, with MukE and MukF via its C-terminal region. The complex formation is stimulated by calcium or magnesium. Interacts with tubulin-related protein FtsZ.</text>
</comment>
<comment type="subcellular location">
    <subcellularLocation>
        <location evidence="1">Cytoplasm</location>
        <location evidence="1">Nucleoid</location>
    </subcellularLocation>
    <text evidence="1">Restricted to the nucleoid region.</text>
</comment>
<comment type="domain">
    <text evidence="1">The hinge domain, which separates the large intramolecular coiled coil regions, allows the homodimerization, forming a V-shaped homodimer.</text>
</comment>
<comment type="similarity">
    <text evidence="1">Belongs to the SMC family. MukB subfamily.</text>
</comment>
<reference key="1">
    <citation type="submission" date="2007-02" db="EMBL/GenBank/DDBJ databases">
        <title>Complete sequence of chromosome of Yersinia pestis Pestoides F.</title>
        <authorList>
            <consortium name="US DOE Joint Genome Institute"/>
            <person name="Copeland A."/>
            <person name="Lucas S."/>
            <person name="Lapidus A."/>
            <person name="Barry K."/>
            <person name="Detter J.C."/>
            <person name="Glavina del Rio T."/>
            <person name="Hammon N."/>
            <person name="Israni S."/>
            <person name="Dalin E."/>
            <person name="Tice H."/>
            <person name="Pitluck S."/>
            <person name="Di Bartolo G."/>
            <person name="Chain P."/>
            <person name="Malfatti S."/>
            <person name="Shin M."/>
            <person name="Vergez L."/>
            <person name="Schmutz J."/>
            <person name="Larimer F."/>
            <person name="Land M."/>
            <person name="Hauser L."/>
            <person name="Worsham P."/>
            <person name="Chu M."/>
            <person name="Bearden S."/>
            <person name="Garcia E."/>
            <person name="Richardson P."/>
        </authorList>
    </citation>
    <scope>NUCLEOTIDE SEQUENCE [LARGE SCALE GENOMIC DNA]</scope>
    <source>
        <strain>Pestoides F</strain>
    </source>
</reference>
<proteinExistence type="inferred from homology"/>
<protein>
    <recommendedName>
        <fullName evidence="1">Chromosome partition protein MukB</fullName>
    </recommendedName>
    <alternativeName>
        <fullName evidence="1">Structural maintenance of chromosome-related protein</fullName>
    </alternativeName>
</protein>
<evidence type="ECO:0000255" key="1">
    <source>
        <dbReference type="HAMAP-Rule" id="MF_01800"/>
    </source>
</evidence>
<name>MUKB_YERPP</name>
<feature type="chain" id="PRO_1000069921" description="Chromosome partition protein MukB">
    <location>
        <begin position="1"/>
        <end position="1485"/>
    </location>
</feature>
<feature type="region of interest" description="Flexible hinge" evidence="1">
    <location>
        <begin position="666"/>
        <end position="783"/>
    </location>
</feature>
<feature type="coiled-coil region" evidence="1">
    <location>
        <begin position="337"/>
        <end position="480"/>
    </location>
</feature>
<feature type="coiled-coil region" evidence="1">
    <location>
        <begin position="509"/>
        <end position="605"/>
    </location>
</feature>
<feature type="coiled-coil region" evidence="1">
    <location>
        <begin position="780"/>
        <end position="805"/>
    </location>
</feature>
<feature type="coiled-coil region" evidence="1">
    <location>
        <begin position="835"/>
        <end position="915"/>
    </location>
</feature>
<feature type="coiled-coil region" evidence="1">
    <location>
        <begin position="977"/>
        <end position="1116"/>
    </location>
</feature>
<feature type="coiled-coil region" evidence="1">
    <location>
        <begin position="1210"/>
        <end position="1235"/>
    </location>
</feature>
<feature type="binding site" evidence="1">
    <location>
        <begin position="34"/>
        <end position="41"/>
    </location>
    <ligand>
        <name>ATP</name>
        <dbReference type="ChEBI" id="CHEBI:30616"/>
    </ligand>
</feature>
<accession>A4TN03</accession>
<organism>
    <name type="scientific">Yersinia pestis (strain Pestoides F)</name>
    <dbReference type="NCBI Taxonomy" id="386656"/>
    <lineage>
        <taxon>Bacteria</taxon>
        <taxon>Pseudomonadati</taxon>
        <taxon>Pseudomonadota</taxon>
        <taxon>Gammaproteobacteria</taxon>
        <taxon>Enterobacterales</taxon>
        <taxon>Yersiniaceae</taxon>
        <taxon>Yersinia</taxon>
    </lineage>
</organism>
<keyword id="KW-0067">ATP-binding</keyword>
<keyword id="KW-0131">Cell cycle</keyword>
<keyword id="KW-0132">Cell division</keyword>
<keyword id="KW-0159">Chromosome partition</keyword>
<keyword id="KW-0175">Coiled coil</keyword>
<keyword id="KW-0963">Cytoplasm</keyword>
<keyword id="KW-0226">DNA condensation</keyword>
<keyword id="KW-0238">DNA-binding</keyword>
<keyword id="KW-0547">Nucleotide-binding</keyword>
<gene>
    <name evidence="1" type="primary">mukB</name>
    <name type="ordered locus">YPDSF_2290</name>
</gene>
<sequence>MIERGKFRSLTLVNWNGFFARTFDLDELVTTLSGGNGAGKSTTMAAFVTALIPDLTLLHFRNTTEAGATSGSRDKGLHGKLRAGVCYSTLDVVNSRHQRVVVGVRLQQVAGRDRKVDIKPFTIQGLPTAIQPTEILTELVAERQARVLSLPELKERVEAMEGVQFKQFNSITDYHSLMFDLGVIPKRLRSSADRSKFYRLIEASLYGGISSAITRSLRDYLLPENSGVRKAFQDMEAALRENRMTLEAIRVTQSDRDLFKHLISEATSYVAADYMRHANERRIHLDSALVLRRDLFSSRKQLVTEQYRHVEMSRELAEQSGAESDLETDYQAASDHLNLVQTAMRQQEKIERYQSDLEELTYRLEEQSEVVSEASEQQADNEARAEAAELEVDELKSQLADYQQALDVQQTRAIQYQQALQALERARALCQLPELTADNAEEWLETFHAKEQEATESLLQLEQKLSVADAAHSQFEQAYQLVVNIAGEVSRSEAWQTARELLRDWPSQQHLAERVQPLRMRLSELEQRLRAQQDAERLLQEFCKRQGNAYQPEELEALQRELESQVEELSLSVSDAGERRMAMRQELEQLKLKIQELTARAPVWLAAQDALSQLSEQSGEALEDSRQVTEYMQQLLERERETTVERDEIAASKRAIEAQIERLSQPSGAEDARLIALAERFGGVLLSEIYDDVTIDDAPYFSALYGPSRHGIVVPDLSLVREHLQGLDDCPEDLYLIEGDPQSFDDSVFAVEEHEKAVVVKIADRQWRYSRYPEVPLFGRAARENRLETLYQERDRLAERYATLSFDVQKTQRTHQAFSRFIGSHLAVAFDADPEAEIRLLNTRRGEIERALNAHEDQNQQQRQQFDQAKEGISALNRLIPLVSLLLDETLTDRVEEITEELAEAQEAARYIQQHGVSLTKLEPLLSVLQSDPQQHEQLQESYVLAQNSQRLAKQQAFALTEVVQRRAHFSYTDSAGMLTENSDLNDKLRQRLEQAEAERTRAREQLRQYQSQFTQYSQVLASLKSSYDAKRDMLKELSQELVDIGVPADANAEARARARRDELHAALSTNRSRRNQLEKQLTFCEAEMDSLQKKLRKLERDYHQIREQVVNAKAGWCAVMRMVKDNGVERRLHRRELAYMDGDELRSMSDKALGALRLAVADNEHLRDVLRLSEDPKRPERKIQFYIAVYQHLRERIRQDIIRTDDPVEAIEQMEIELGRLTEELTAREQKLAISSKSVSNIIRKTIHREQNRIRMLNQGLQAVSFGQVKSVRLNVNVREAHATLLDVLSEQQEQHQDLFNSNRLTFSEALAKLYQRLNPQMDMGQRLPQTIGEELLDYRNYLELEVEVYRGADGWLRAESGALSTGEAIGTGMSILVMVVQSWEEESRRLRGKDISPCRLLFLDEAARLDAKSIATLFELCERLEMQLIIAAPENISPEKGTTYKLVRKVFQNHEHVHVVGLRGFANEMPSLPPIAAELQQGG</sequence>
<dbReference type="EMBL" id="CP000668">
    <property type="protein sequence ID" value="ABP40665.1"/>
    <property type="molecule type" value="Genomic_DNA"/>
</dbReference>
<dbReference type="RefSeq" id="WP_002211308.1">
    <property type="nucleotide sequence ID" value="NZ_CP009715.1"/>
</dbReference>
<dbReference type="SMR" id="A4TN03"/>
<dbReference type="GeneID" id="57977201"/>
<dbReference type="KEGG" id="ypp:YPDSF_2290"/>
<dbReference type="PATRIC" id="fig|386656.14.peg.3781"/>
<dbReference type="GO" id="GO:0005737">
    <property type="term" value="C:cytoplasm"/>
    <property type="evidence" value="ECO:0007669"/>
    <property type="project" value="UniProtKB-UniRule"/>
</dbReference>
<dbReference type="GO" id="GO:0009295">
    <property type="term" value="C:nucleoid"/>
    <property type="evidence" value="ECO:0007669"/>
    <property type="project" value="UniProtKB-SubCell"/>
</dbReference>
<dbReference type="GO" id="GO:0005524">
    <property type="term" value="F:ATP binding"/>
    <property type="evidence" value="ECO:0007669"/>
    <property type="project" value="UniProtKB-UniRule"/>
</dbReference>
<dbReference type="GO" id="GO:0003677">
    <property type="term" value="F:DNA binding"/>
    <property type="evidence" value="ECO:0007669"/>
    <property type="project" value="UniProtKB-UniRule"/>
</dbReference>
<dbReference type="GO" id="GO:0051301">
    <property type="term" value="P:cell division"/>
    <property type="evidence" value="ECO:0007669"/>
    <property type="project" value="UniProtKB-KW"/>
</dbReference>
<dbReference type="GO" id="GO:0030261">
    <property type="term" value="P:chromosome condensation"/>
    <property type="evidence" value="ECO:0007669"/>
    <property type="project" value="UniProtKB-KW"/>
</dbReference>
<dbReference type="GO" id="GO:0007059">
    <property type="term" value="P:chromosome segregation"/>
    <property type="evidence" value="ECO:0007669"/>
    <property type="project" value="UniProtKB-UniRule"/>
</dbReference>
<dbReference type="GO" id="GO:0006260">
    <property type="term" value="P:DNA replication"/>
    <property type="evidence" value="ECO:0007669"/>
    <property type="project" value="UniProtKB-UniRule"/>
</dbReference>
<dbReference type="FunFam" id="3.30.70.3500:FF:000001">
    <property type="entry name" value="Chromosome partition protein MukB"/>
    <property type="match status" value="1"/>
</dbReference>
<dbReference type="FunFam" id="3.40.1140.10:FF:000001">
    <property type="entry name" value="Chromosome partition protein MukB"/>
    <property type="match status" value="1"/>
</dbReference>
<dbReference type="FunFam" id="3.40.1140.10:FF:000002">
    <property type="entry name" value="Chromosome partition protein MukB"/>
    <property type="match status" value="1"/>
</dbReference>
<dbReference type="Gene3D" id="1.10.287.1490">
    <property type="match status" value="1"/>
</dbReference>
<dbReference type="Gene3D" id="1.20.58.850">
    <property type="match status" value="1"/>
</dbReference>
<dbReference type="Gene3D" id="3.40.1140.10">
    <property type="match status" value="2"/>
</dbReference>
<dbReference type="Gene3D" id="1.20.5.420">
    <property type="entry name" value="Immunoglobulin FC, subunit C"/>
    <property type="match status" value="1"/>
</dbReference>
<dbReference type="Gene3D" id="3.30.70.3500">
    <property type="entry name" value="MukB, hinge domain"/>
    <property type="match status" value="1"/>
</dbReference>
<dbReference type="HAMAP" id="MF_01800">
    <property type="entry name" value="MukB"/>
    <property type="match status" value="1"/>
</dbReference>
<dbReference type="InterPro" id="IPR012090">
    <property type="entry name" value="MukB"/>
</dbReference>
<dbReference type="InterPro" id="IPR050308">
    <property type="entry name" value="MukB/SMC"/>
</dbReference>
<dbReference type="InterPro" id="IPR032520">
    <property type="entry name" value="MukB_hinge"/>
</dbReference>
<dbReference type="InterPro" id="IPR042501">
    <property type="entry name" value="MukB_hinge_sf"/>
</dbReference>
<dbReference type="InterPro" id="IPR007406">
    <property type="entry name" value="MukB_N_dom"/>
</dbReference>
<dbReference type="InterPro" id="IPR027417">
    <property type="entry name" value="P-loop_NTPase"/>
</dbReference>
<dbReference type="NCBIfam" id="NF003422">
    <property type="entry name" value="PRK04863.1"/>
    <property type="match status" value="1"/>
</dbReference>
<dbReference type="PANTHER" id="PTHR42963">
    <property type="entry name" value="CHROMOSOME PARTITION PROTEIN MUKB"/>
    <property type="match status" value="1"/>
</dbReference>
<dbReference type="PANTHER" id="PTHR42963:SF1">
    <property type="entry name" value="DUF4476 DOMAIN-CONTAINING PROTEIN"/>
    <property type="match status" value="1"/>
</dbReference>
<dbReference type="Pfam" id="PF04310">
    <property type="entry name" value="MukB"/>
    <property type="match status" value="1"/>
</dbReference>
<dbReference type="Pfam" id="PF16330">
    <property type="entry name" value="MukB_hinge"/>
    <property type="match status" value="1"/>
</dbReference>
<dbReference type="Pfam" id="PF13558">
    <property type="entry name" value="SbcC_Walker_B"/>
    <property type="match status" value="1"/>
</dbReference>
<dbReference type="PIRSF" id="PIRSF005246">
    <property type="entry name" value="MukB"/>
    <property type="match status" value="1"/>
</dbReference>
<dbReference type="SUPFAM" id="SSF52540">
    <property type="entry name" value="P-loop containing nucleoside triphosphate hydrolases"/>
    <property type="match status" value="2"/>
</dbReference>